<evidence type="ECO:0000255" key="1">
    <source>
        <dbReference type="HAMAP-Rule" id="MF_00005"/>
    </source>
</evidence>
<comment type="catalytic activity">
    <reaction evidence="1">
        <text>L-citrulline + L-aspartate + ATP = 2-(N(omega)-L-arginino)succinate + AMP + diphosphate + H(+)</text>
        <dbReference type="Rhea" id="RHEA:10932"/>
        <dbReference type="ChEBI" id="CHEBI:15378"/>
        <dbReference type="ChEBI" id="CHEBI:29991"/>
        <dbReference type="ChEBI" id="CHEBI:30616"/>
        <dbReference type="ChEBI" id="CHEBI:33019"/>
        <dbReference type="ChEBI" id="CHEBI:57472"/>
        <dbReference type="ChEBI" id="CHEBI:57743"/>
        <dbReference type="ChEBI" id="CHEBI:456215"/>
        <dbReference type="EC" id="6.3.4.5"/>
    </reaction>
</comment>
<comment type="pathway">
    <text evidence="1">Amino-acid biosynthesis; L-arginine biosynthesis; L-arginine from L-ornithine and carbamoyl phosphate: step 2/3.</text>
</comment>
<comment type="subunit">
    <text evidence="1">Homotetramer.</text>
</comment>
<comment type="subcellular location">
    <subcellularLocation>
        <location evidence="1">Cytoplasm</location>
    </subcellularLocation>
</comment>
<comment type="similarity">
    <text evidence="1">Belongs to the argininosuccinate synthase family. Type 1 subfamily.</text>
</comment>
<gene>
    <name evidence="1" type="primary">argG</name>
    <name type="ordered locus">ELI_07850</name>
</gene>
<feature type="chain" id="PRO_0000321311" description="Argininosuccinate synthase">
    <location>
        <begin position="1"/>
        <end position="404"/>
    </location>
</feature>
<feature type="binding site" evidence="1">
    <location>
        <begin position="10"/>
        <end position="18"/>
    </location>
    <ligand>
        <name>ATP</name>
        <dbReference type="ChEBI" id="CHEBI:30616"/>
    </ligand>
</feature>
<feature type="binding site" evidence="1">
    <location>
        <position position="37"/>
    </location>
    <ligand>
        <name>ATP</name>
        <dbReference type="ChEBI" id="CHEBI:30616"/>
    </ligand>
</feature>
<feature type="binding site" evidence="1">
    <location>
        <position position="90"/>
    </location>
    <ligand>
        <name>L-citrulline</name>
        <dbReference type="ChEBI" id="CHEBI:57743"/>
    </ligand>
</feature>
<feature type="binding site" evidence="1">
    <location>
        <position position="95"/>
    </location>
    <ligand>
        <name>L-citrulline</name>
        <dbReference type="ChEBI" id="CHEBI:57743"/>
    </ligand>
</feature>
<feature type="binding site" evidence="1">
    <location>
        <position position="120"/>
    </location>
    <ligand>
        <name>ATP</name>
        <dbReference type="ChEBI" id="CHEBI:30616"/>
    </ligand>
</feature>
<feature type="binding site" evidence="1">
    <location>
        <position position="122"/>
    </location>
    <ligand>
        <name>L-aspartate</name>
        <dbReference type="ChEBI" id="CHEBI:29991"/>
    </ligand>
</feature>
<feature type="binding site" evidence="1">
    <location>
        <position position="126"/>
    </location>
    <ligand>
        <name>L-aspartate</name>
        <dbReference type="ChEBI" id="CHEBI:29991"/>
    </ligand>
</feature>
<feature type="binding site" evidence="1">
    <location>
        <position position="126"/>
    </location>
    <ligand>
        <name>L-citrulline</name>
        <dbReference type="ChEBI" id="CHEBI:57743"/>
    </ligand>
</feature>
<feature type="binding site" evidence="1">
    <location>
        <position position="127"/>
    </location>
    <ligand>
        <name>L-aspartate</name>
        <dbReference type="ChEBI" id="CHEBI:29991"/>
    </ligand>
</feature>
<feature type="binding site" evidence="1">
    <location>
        <position position="130"/>
    </location>
    <ligand>
        <name>L-citrulline</name>
        <dbReference type="ChEBI" id="CHEBI:57743"/>
    </ligand>
</feature>
<feature type="binding site" evidence="1">
    <location>
        <position position="181"/>
    </location>
    <ligand>
        <name>L-citrulline</name>
        <dbReference type="ChEBI" id="CHEBI:57743"/>
    </ligand>
</feature>
<feature type="binding site" evidence="1">
    <location>
        <position position="190"/>
    </location>
    <ligand>
        <name>L-citrulline</name>
        <dbReference type="ChEBI" id="CHEBI:57743"/>
    </ligand>
</feature>
<feature type="binding site" evidence="1">
    <location>
        <position position="266"/>
    </location>
    <ligand>
        <name>L-citrulline</name>
        <dbReference type="ChEBI" id="CHEBI:57743"/>
    </ligand>
</feature>
<feature type="binding site" evidence="1">
    <location>
        <position position="278"/>
    </location>
    <ligand>
        <name>L-citrulline</name>
        <dbReference type="ChEBI" id="CHEBI:57743"/>
    </ligand>
</feature>
<accession>Q2N9H9</accession>
<proteinExistence type="inferred from homology"/>
<reference key="1">
    <citation type="journal article" date="2009" name="J. Bacteriol.">
        <title>Complete genome sequence of Erythrobacter litoralis HTCC2594.</title>
        <authorList>
            <person name="Oh H.M."/>
            <person name="Giovannoni S.J."/>
            <person name="Ferriera S."/>
            <person name="Johnson J."/>
            <person name="Cho J.C."/>
        </authorList>
    </citation>
    <scope>NUCLEOTIDE SEQUENCE [LARGE SCALE GENOMIC DNA]</scope>
    <source>
        <strain>HTCC2594</strain>
    </source>
</reference>
<keyword id="KW-0028">Amino-acid biosynthesis</keyword>
<keyword id="KW-0055">Arginine biosynthesis</keyword>
<keyword id="KW-0067">ATP-binding</keyword>
<keyword id="KW-0963">Cytoplasm</keyword>
<keyword id="KW-0436">Ligase</keyword>
<keyword id="KW-0547">Nucleotide-binding</keyword>
<keyword id="KW-1185">Reference proteome</keyword>
<protein>
    <recommendedName>
        <fullName evidence="1">Argininosuccinate synthase</fullName>
        <ecNumber evidence="1">6.3.4.5</ecNumber>
    </recommendedName>
    <alternativeName>
        <fullName evidence="1">Citrulline--aspartate ligase</fullName>
    </alternativeName>
</protein>
<dbReference type="EC" id="6.3.4.5" evidence="1"/>
<dbReference type="EMBL" id="CP000157">
    <property type="protein sequence ID" value="ABC63662.1"/>
    <property type="molecule type" value="Genomic_DNA"/>
</dbReference>
<dbReference type="RefSeq" id="WP_011414496.1">
    <property type="nucleotide sequence ID" value="NC_007722.1"/>
</dbReference>
<dbReference type="SMR" id="Q2N9H9"/>
<dbReference type="STRING" id="314225.ELI_07850"/>
<dbReference type="KEGG" id="eli:ELI_07850"/>
<dbReference type="eggNOG" id="COG0137">
    <property type="taxonomic scope" value="Bacteria"/>
</dbReference>
<dbReference type="HOGENOM" id="CLU_032784_4_2_5"/>
<dbReference type="OrthoDB" id="9801641at2"/>
<dbReference type="UniPathway" id="UPA00068">
    <property type="reaction ID" value="UER00113"/>
</dbReference>
<dbReference type="Proteomes" id="UP000008808">
    <property type="component" value="Chromosome"/>
</dbReference>
<dbReference type="GO" id="GO:0005737">
    <property type="term" value="C:cytoplasm"/>
    <property type="evidence" value="ECO:0007669"/>
    <property type="project" value="UniProtKB-SubCell"/>
</dbReference>
<dbReference type="GO" id="GO:0004055">
    <property type="term" value="F:argininosuccinate synthase activity"/>
    <property type="evidence" value="ECO:0007669"/>
    <property type="project" value="UniProtKB-UniRule"/>
</dbReference>
<dbReference type="GO" id="GO:0005524">
    <property type="term" value="F:ATP binding"/>
    <property type="evidence" value="ECO:0007669"/>
    <property type="project" value="UniProtKB-UniRule"/>
</dbReference>
<dbReference type="GO" id="GO:0000053">
    <property type="term" value="P:argininosuccinate metabolic process"/>
    <property type="evidence" value="ECO:0007669"/>
    <property type="project" value="TreeGrafter"/>
</dbReference>
<dbReference type="GO" id="GO:0006526">
    <property type="term" value="P:L-arginine biosynthetic process"/>
    <property type="evidence" value="ECO:0007669"/>
    <property type="project" value="UniProtKB-UniRule"/>
</dbReference>
<dbReference type="GO" id="GO:0000050">
    <property type="term" value="P:urea cycle"/>
    <property type="evidence" value="ECO:0007669"/>
    <property type="project" value="TreeGrafter"/>
</dbReference>
<dbReference type="CDD" id="cd01999">
    <property type="entry name" value="ASS"/>
    <property type="match status" value="1"/>
</dbReference>
<dbReference type="FunFam" id="3.40.50.620:FF:000019">
    <property type="entry name" value="Argininosuccinate synthase"/>
    <property type="match status" value="1"/>
</dbReference>
<dbReference type="FunFam" id="3.90.1260.10:FF:000007">
    <property type="entry name" value="Argininosuccinate synthase"/>
    <property type="match status" value="1"/>
</dbReference>
<dbReference type="Gene3D" id="3.90.1260.10">
    <property type="entry name" value="Argininosuccinate synthetase, chain A, domain 2"/>
    <property type="match status" value="1"/>
</dbReference>
<dbReference type="Gene3D" id="3.40.50.620">
    <property type="entry name" value="HUPs"/>
    <property type="match status" value="1"/>
</dbReference>
<dbReference type="HAMAP" id="MF_00005">
    <property type="entry name" value="Arg_succ_synth_type1"/>
    <property type="match status" value="1"/>
</dbReference>
<dbReference type="InterPro" id="IPR048268">
    <property type="entry name" value="Arginosuc_syn_C"/>
</dbReference>
<dbReference type="InterPro" id="IPR048267">
    <property type="entry name" value="Arginosuc_syn_N"/>
</dbReference>
<dbReference type="InterPro" id="IPR001518">
    <property type="entry name" value="Arginosuc_synth"/>
</dbReference>
<dbReference type="InterPro" id="IPR018223">
    <property type="entry name" value="Arginosuc_synth_CS"/>
</dbReference>
<dbReference type="InterPro" id="IPR023434">
    <property type="entry name" value="Arginosuc_synth_type_1_subfam"/>
</dbReference>
<dbReference type="InterPro" id="IPR024074">
    <property type="entry name" value="AS_cat/multimer_dom_body"/>
</dbReference>
<dbReference type="InterPro" id="IPR014729">
    <property type="entry name" value="Rossmann-like_a/b/a_fold"/>
</dbReference>
<dbReference type="NCBIfam" id="TIGR00032">
    <property type="entry name" value="argG"/>
    <property type="match status" value="1"/>
</dbReference>
<dbReference type="NCBIfam" id="NF001770">
    <property type="entry name" value="PRK00509.1"/>
    <property type="match status" value="1"/>
</dbReference>
<dbReference type="PANTHER" id="PTHR11587">
    <property type="entry name" value="ARGININOSUCCINATE SYNTHASE"/>
    <property type="match status" value="1"/>
</dbReference>
<dbReference type="PANTHER" id="PTHR11587:SF2">
    <property type="entry name" value="ARGININOSUCCINATE SYNTHASE"/>
    <property type="match status" value="1"/>
</dbReference>
<dbReference type="Pfam" id="PF20979">
    <property type="entry name" value="Arginosuc_syn_C"/>
    <property type="match status" value="1"/>
</dbReference>
<dbReference type="Pfam" id="PF00764">
    <property type="entry name" value="Arginosuc_synth"/>
    <property type="match status" value="1"/>
</dbReference>
<dbReference type="SUPFAM" id="SSF52402">
    <property type="entry name" value="Adenine nucleotide alpha hydrolases-like"/>
    <property type="match status" value="1"/>
</dbReference>
<dbReference type="SUPFAM" id="SSF69864">
    <property type="entry name" value="Argininosuccinate synthetase, C-terminal domain"/>
    <property type="match status" value="1"/>
</dbReference>
<dbReference type="PROSITE" id="PS00564">
    <property type="entry name" value="ARGININOSUCCIN_SYN_1"/>
    <property type="match status" value="1"/>
</dbReference>
<dbReference type="PROSITE" id="PS00565">
    <property type="entry name" value="ARGININOSUCCIN_SYN_2"/>
    <property type="match status" value="1"/>
</dbReference>
<organism>
    <name type="scientific">Erythrobacter litoralis (strain HTCC2594)</name>
    <dbReference type="NCBI Taxonomy" id="314225"/>
    <lineage>
        <taxon>Bacteria</taxon>
        <taxon>Pseudomonadati</taxon>
        <taxon>Pseudomonadota</taxon>
        <taxon>Alphaproteobacteria</taxon>
        <taxon>Sphingomonadales</taxon>
        <taxon>Erythrobacteraceae</taxon>
        <taxon>Erythrobacter/Porphyrobacter group</taxon>
        <taxon>Erythrobacter</taxon>
    </lineage>
</organism>
<sequence>MPDIKRVVLAYSGGLDTSVIAKWLEVERGLEVVTFTADLGQGEELEPARAKAQAMGIPDKHIFIEDLREEFVRDYVFPMMRANARYEGDYLLGTSIARPLISKRLVEIAQETGADAIAHGATGKGNDQVRFELSAYALDPDIKVIAPWREWDLTSRTALIAWAEKHQIQVPKDKRGESPFSTDANLLHTSSEGKVLEDPWEETPDYVYSRTVNPEDAPDEPEFITIDFERGDGIALNGEAMSPANLLTALNELGRKHGIGRLDLVENRFVGMKSRGMYETPGGEIYARAHRGIEQITLDRGAAHLKDELMPKYAELIYNGFWFSPEREMLQAAIDLSQDKVSGTVRLKLYKGNADVVGRKSPNSLYSEAHVTFEDDAGAYDQSDAEGFIRLNALRLKLLGKRDR</sequence>
<name>ASSY_ERYLH</name>